<sequence length="461" mass="50124">MEKYVVVLAAGKGTRMKSKLYKVLHKVCGKTMVEHVVDAASGINPTKIVTVVGTGAGEVEKILANKSDFAFQEKQVGTGDAVMTAKEALGDKEGATLVVTGDTPLFTTDTFNELFKYHAEKGNAATVLTAEAPNPFGYGRIIRDNQGNVLRIVEQKDGNPDELKVKEINTGVFCFDNQKLFEALKHVDNDNAQGEYYLTDVLEILRNNGERVGAYKMPDFSESLGVNDRVALAQATKTMQRRINEAHMRDGVSFIDPDTAYIDADVKIGNDTVIEGNVVIKGNTEIGSDCYITNGSRIVDSKIGNGVTITSSTIEEAEMDDNTDIGPNSHLRPKAIIRKGAHIGNFVEIKKAEIGENTKVGHLTYVGDATLGKDINIGCGTIFSNYDGVKKFHTNVGDHSFIGAGSTLIAPINVADHAFIAADSTITKDVGKYDMAIARGRQTNKEDYWHKLPLSKDKDWE</sequence>
<gene>
    <name evidence="1" type="primary">glmU</name>
    <name type="ordered locus">lhv_0235</name>
</gene>
<comment type="function">
    <text evidence="1">Catalyzes the last two sequential reactions in the de novo biosynthetic pathway for UDP-N-acetylglucosamine (UDP-GlcNAc). The C-terminal domain catalyzes the transfer of acetyl group from acetyl coenzyme A to glucosamine-1-phosphate (GlcN-1-P) to produce N-acetylglucosamine-1-phosphate (GlcNAc-1-P), which is converted into UDP-GlcNAc by the transfer of uridine 5-monophosphate (from uridine 5-triphosphate), a reaction catalyzed by the N-terminal domain.</text>
</comment>
<comment type="catalytic activity">
    <reaction evidence="1">
        <text>alpha-D-glucosamine 1-phosphate + acetyl-CoA = N-acetyl-alpha-D-glucosamine 1-phosphate + CoA + H(+)</text>
        <dbReference type="Rhea" id="RHEA:13725"/>
        <dbReference type="ChEBI" id="CHEBI:15378"/>
        <dbReference type="ChEBI" id="CHEBI:57287"/>
        <dbReference type="ChEBI" id="CHEBI:57288"/>
        <dbReference type="ChEBI" id="CHEBI:57776"/>
        <dbReference type="ChEBI" id="CHEBI:58516"/>
        <dbReference type="EC" id="2.3.1.157"/>
    </reaction>
</comment>
<comment type="catalytic activity">
    <reaction evidence="1">
        <text>N-acetyl-alpha-D-glucosamine 1-phosphate + UTP + H(+) = UDP-N-acetyl-alpha-D-glucosamine + diphosphate</text>
        <dbReference type="Rhea" id="RHEA:13509"/>
        <dbReference type="ChEBI" id="CHEBI:15378"/>
        <dbReference type="ChEBI" id="CHEBI:33019"/>
        <dbReference type="ChEBI" id="CHEBI:46398"/>
        <dbReference type="ChEBI" id="CHEBI:57705"/>
        <dbReference type="ChEBI" id="CHEBI:57776"/>
        <dbReference type="EC" id="2.7.7.23"/>
    </reaction>
</comment>
<comment type="cofactor">
    <cofactor evidence="1">
        <name>Mg(2+)</name>
        <dbReference type="ChEBI" id="CHEBI:18420"/>
    </cofactor>
    <text evidence="1">Binds 1 Mg(2+) ion per subunit.</text>
</comment>
<comment type="pathway">
    <text evidence="1">Nucleotide-sugar biosynthesis; UDP-N-acetyl-alpha-D-glucosamine biosynthesis; N-acetyl-alpha-D-glucosamine 1-phosphate from alpha-D-glucosamine 6-phosphate (route II): step 2/2.</text>
</comment>
<comment type="pathway">
    <text evidence="1">Nucleotide-sugar biosynthesis; UDP-N-acetyl-alpha-D-glucosamine biosynthesis; UDP-N-acetyl-alpha-D-glucosamine from N-acetyl-alpha-D-glucosamine 1-phosphate: step 1/1.</text>
</comment>
<comment type="pathway">
    <text evidence="1">Bacterial outer membrane biogenesis; LPS lipid A biosynthesis.</text>
</comment>
<comment type="subunit">
    <text evidence="1">Homotrimer.</text>
</comment>
<comment type="subcellular location">
    <subcellularLocation>
        <location evidence="1">Cytoplasm</location>
    </subcellularLocation>
</comment>
<comment type="similarity">
    <text evidence="1">In the N-terminal section; belongs to the N-acetylglucosamine-1-phosphate uridyltransferase family.</text>
</comment>
<comment type="similarity">
    <text evidence="1">In the C-terminal section; belongs to the transferase hexapeptide repeat family.</text>
</comment>
<proteinExistence type="inferred from homology"/>
<accession>A8YX58</accession>
<protein>
    <recommendedName>
        <fullName evidence="1">Bifunctional protein GlmU</fullName>
    </recommendedName>
    <domain>
        <recommendedName>
            <fullName evidence="1">UDP-N-acetylglucosamine pyrophosphorylase</fullName>
            <ecNumber evidence="1">2.7.7.23</ecNumber>
        </recommendedName>
        <alternativeName>
            <fullName evidence="1">N-acetylglucosamine-1-phosphate uridyltransferase</fullName>
        </alternativeName>
    </domain>
    <domain>
        <recommendedName>
            <fullName evidence="1">Glucosamine-1-phosphate N-acetyltransferase</fullName>
            <ecNumber evidence="1">2.3.1.157</ecNumber>
        </recommendedName>
    </domain>
</protein>
<organism>
    <name type="scientific">Lactobacillus helveticus (strain DPC 4571)</name>
    <dbReference type="NCBI Taxonomy" id="405566"/>
    <lineage>
        <taxon>Bacteria</taxon>
        <taxon>Bacillati</taxon>
        <taxon>Bacillota</taxon>
        <taxon>Bacilli</taxon>
        <taxon>Lactobacillales</taxon>
        <taxon>Lactobacillaceae</taxon>
        <taxon>Lactobacillus</taxon>
    </lineage>
</organism>
<evidence type="ECO:0000255" key="1">
    <source>
        <dbReference type="HAMAP-Rule" id="MF_01631"/>
    </source>
</evidence>
<feature type="chain" id="PRO_1000073647" description="Bifunctional protein GlmU">
    <location>
        <begin position="1"/>
        <end position="461"/>
    </location>
</feature>
<feature type="region of interest" description="Pyrophosphorylase" evidence="1">
    <location>
        <begin position="1"/>
        <end position="229"/>
    </location>
</feature>
<feature type="region of interest" description="Linker" evidence="1">
    <location>
        <begin position="230"/>
        <end position="250"/>
    </location>
</feature>
<feature type="region of interest" description="N-acetyltransferase" evidence="1">
    <location>
        <begin position="251"/>
        <end position="461"/>
    </location>
</feature>
<feature type="active site" description="Proton acceptor" evidence="1">
    <location>
        <position position="362"/>
    </location>
</feature>
<feature type="binding site" evidence="1">
    <location>
        <begin position="8"/>
        <end position="11"/>
    </location>
    <ligand>
        <name>UDP-N-acetyl-alpha-D-glucosamine</name>
        <dbReference type="ChEBI" id="CHEBI:57705"/>
    </ligand>
</feature>
<feature type="binding site" evidence="1">
    <location>
        <position position="22"/>
    </location>
    <ligand>
        <name>UDP-N-acetyl-alpha-D-glucosamine</name>
        <dbReference type="ChEBI" id="CHEBI:57705"/>
    </ligand>
</feature>
<feature type="binding site" evidence="1">
    <location>
        <position position="72"/>
    </location>
    <ligand>
        <name>UDP-N-acetyl-alpha-D-glucosamine</name>
        <dbReference type="ChEBI" id="CHEBI:57705"/>
    </ligand>
</feature>
<feature type="binding site" evidence="1">
    <location>
        <begin position="77"/>
        <end position="78"/>
    </location>
    <ligand>
        <name>UDP-N-acetyl-alpha-D-glucosamine</name>
        <dbReference type="ChEBI" id="CHEBI:57705"/>
    </ligand>
</feature>
<feature type="binding site" evidence="1">
    <location>
        <position position="102"/>
    </location>
    <ligand>
        <name>Mg(2+)</name>
        <dbReference type="ChEBI" id="CHEBI:18420"/>
    </ligand>
</feature>
<feature type="binding site" evidence="1">
    <location>
        <position position="139"/>
    </location>
    <ligand>
        <name>UDP-N-acetyl-alpha-D-glucosamine</name>
        <dbReference type="ChEBI" id="CHEBI:57705"/>
    </ligand>
</feature>
<feature type="binding site" evidence="1">
    <location>
        <position position="154"/>
    </location>
    <ligand>
        <name>UDP-N-acetyl-alpha-D-glucosamine</name>
        <dbReference type="ChEBI" id="CHEBI:57705"/>
    </ligand>
</feature>
<feature type="binding site" evidence="1">
    <location>
        <position position="169"/>
    </location>
    <ligand>
        <name>UDP-N-acetyl-alpha-D-glucosamine</name>
        <dbReference type="ChEBI" id="CHEBI:57705"/>
    </ligand>
</feature>
<feature type="binding site" evidence="1">
    <location>
        <position position="227"/>
    </location>
    <ligand>
        <name>Mg(2+)</name>
        <dbReference type="ChEBI" id="CHEBI:18420"/>
    </ligand>
</feature>
<feature type="binding site" evidence="1">
    <location>
        <position position="227"/>
    </location>
    <ligand>
        <name>UDP-N-acetyl-alpha-D-glucosamine</name>
        <dbReference type="ChEBI" id="CHEBI:57705"/>
    </ligand>
</feature>
<feature type="binding site" evidence="1">
    <location>
        <position position="332"/>
    </location>
    <ligand>
        <name>UDP-N-acetyl-alpha-D-glucosamine</name>
        <dbReference type="ChEBI" id="CHEBI:57705"/>
    </ligand>
</feature>
<feature type="binding site" evidence="1">
    <location>
        <position position="350"/>
    </location>
    <ligand>
        <name>UDP-N-acetyl-alpha-D-glucosamine</name>
        <dbReference type="ChEBI" id="CHEBI:57705"/>
    </ligand>
</feature>
<feature type="binding site" evidence="1">
    <location>
        <position position="365"/>
    </location>
    <ligand>
        <name>UDP-N-acetyl-alpha-D-glucosamine</name>
        <dbReference type="ChEBI" id="CHEBI:57705"/>
    </ligand>
</feature>
<feature type="binding site" evidence="1">
    <location>
        <position position="376"/>
    </location>
    <ligand>
        <name>UDP-N-acetyl-alpha-D-glucosamine</name>
        <dbReference type="ChEBI" id="CHEBI:57705"/>
    </ligand>
</feature>
<feature type="binding site" evidence="1">
    <location>
        <begin position="385"/>
        <end position="386"/>
    </location>
    <ligand>
        <name>acetyl-CoA</name>
        <dbReference type="ChEBI" id="CHEBI:57288"/>
    </ligand>
</feature>
<feature type="binding site" evidence="1">
    <location>
        <position position="422"/>
    </location>
    <ligand>
        <name>acetyl-CoA</name>
        <dbReference type="ChEBI" id="CHEBI:57288"/>
    </ligand>
</feature>
<feature type="binding site" evidence="1">
    <location>
        <position position="439"/>
    </location>
    <ligand>
        <name>acetyl-CoA</name>
        <dbReference type="ChEBI" id="CHEBI:57288"/>
    </ligand>
</feature>
<name>GLMU_LACH4</name>
<keyword id="KW-0012">Acyltransferase</keyword>
<keyword id="KW-0133">Cell shape</keyword>
<keyword id="KW-0961">Cell wall biogenesis/degradation</keyword>
<keyword id="KW-0963">Cytoplasm</keyword>
<keyword id="KW-0460">Magnesium</keyword>
<keyword id="KW-0479">Metal-binding</keyword>
<keyword id="KW-0511">Multifunctional enzyme</keyword>
<keyword id="KW-0548">Nucleotidyltransferase</keyword>
<keyword id="KW-0573">Peptidoglycan synthesis</keyword>
<keyword id="KW-0677">Repeat</keyword>
<keyword id="KW-0808">Transferase</keyword>
<reference key="1">
    <citation type="journal article" date="2008" name="J. Bacteriol.">
        <title>Genome sequence of Lactobacillus helveticus: an organism distinguished by selective gene loss and IS element expansion.</title>
        <authorList>
            <person name="Callanan M."/>
            <person name="Kaleta P."/>
            <person name="O'Callaghan J."/>
            <person name="O'Sullivan O."/>
            <person name="Jordan K."/>
            <person name="McAuliffe O."/>
            <person name="Sangrador-Vegas A."/>
            <person name="Slattery L."/>
            <person name="Fitzgerald G.F."/>
            <person name="Beresford T."/>
            <person name="Ross R.P."/>
        </authorList>
    </citation>
    <scope>NUCLEOTIDE SEQUENCE [LARGE SCALE GENOMIC DNA]</scope>
    <source>
        <strain>DPC 4571</strain>
    </source>
</reference>
<dbReference type="EC" id="2.7.7.23" evidence="1"/>
<dbReference type="EC" id="2.3.1.157" evidence="1"/>
<dbReference type="EMBL" id="CP000517">
    <property type="protein sequence ID" value="ABX26481.1"/>
    <property type="molecule type" value="Genomic_DNA"/>
</dbReference>
<dbReference type="RefSeq" id="WP_012211335.1">
    <property type="nucleotide sequence ID" value="NC_010080.1"/>
</dbReference>
<dbReference type="SMR" id="A8YX58"/>
<dbReference type="KEGG" id="lhe:lhv_0235"/>
<dbReference type="eggNOG" id="COG1207">
    <property type="taxonomic scope" value="Bacteria"/>
</dbReference>
<dbReference type="HOGENOM" id="CLU_029499_15_2_9"/>
<dbReference type="UniPathway" id="UPA00113">
    <property type="reaction ID" value="UER00532"/>
</dbReference>
<dbReference type="UniPathway" id="UPA00113">
    <property type="reaction ID" value="UER00533"/>
</dbReference>
<dbReference type="UniPathway" id="UPA00973"/>
<dbReference type="Proteomes" id="UP000000790">
    <property type="component" value="Chromosome"/>
</dbReference>
<dbReference type="GO" id="GO:0005737">
    <property type="term" value="C:cytoplasm"/>
    <property type="evidence" value="ECO:0007669"/>
    <property type="project" value="UniProtKB-SubCell"/>
</dbReference>
<dbReference type="GO" id="GO:0016020">
    <property type="term" value="C:membrane"/>
    <property type="evidence" value="ECO:0007669"/>
    <property type="project" value="GOC"/>
</dbReference>
<dbReference type="GO" id="GO:0019134">
    <property type="term" value="F:glucosamine-1-phosphate N-acetyltransferase activity"/>
    <property type="evidence" value="ECO:0007669"/>
    <property type="project" value="UniProtKB-UniRule"/>
</dbReference>
<dbReference type="GO" id="GO:0000287">
    <property type="term" value="F:magnesium ion binding"/>
    <property type="evidence" value="ECO:0007669"/>
    <property type="project" value="UniProtKB-UniRule"/>
</dbReference>
<dbReference type="GO" id="GO:0003977">
    <property type="term" value="F:UDP-N-acetylglucosamine diphosphorylase activity"/>
    <property type="evidence" value="ECO:0007669"/>
    <property type="project" value="UniProtKB-UniRule"/>
</dbReference>
<dbReference type="GO" id="GO:0000902">
    <property type="term" value="P:cell morphogenesis"/>
    <property type="evidence" value="ECO:0007669"/>
    <property type="project" value="UniProtKB-UniRule"/>
</dbReference>
<dbReference type="GO" id="GO:0071555">
    <property type="term" value="P:cell wall organization"/>
    <property type="evidence" value="ECO:0007669"/>
    <property type="project" value="UniProtKB-KW"/>
</dbReference>
<dbReference type="GO" id="GO:0009245">
    <property type="term" value="P:lipid A biosynthetic process"/>
    <property type="evidence" value="ECO:0007669"/>
    <property type="project" value="UniProtKB-UniRule"/>
</dbReference>
<dbReference type="GO" id="GO:0009252">
    <property type="term" value="P:peptidoglycan biosynthetic process"/>
    <property type="evidence" value="ECO:0007669"/>
    <property type="project" value="UniProtKB-UniRule"/>
</dbReference>
<dbReference type="GO" id="GO:0008360">
    <property type="term" value="P:regulation of cell shape"/>
    <property type="evidence" value="ECO:0007669"/>
    <property type="project" value="UniProtKB-KW"/>
</dbReference>
<dbReference type="GO" id="GO:0006048">
    <property type="term" value="P:UDP-N-acetylglucosamine biosynthetic process"/>
    <property type="evidence" value="ECO:0007669"/>
    <property type="project" value="UniProtKB-UniPathway"/>
</dbReference>
<dbReference type="CDD" id="cd02540">
    <property type="entry name" value="GT2_GlmU_N_bac"/>
    <property type="match status" value="1"/>
</dbReference>
<dbReference type="CDD" id="cd03353">
    <property type="entry name" value="LbH_GlmU_C"/>
    <property type="match status" value="1"/>
</dbReference>
<dbReference type="Gene3D" id="2.160.10.10">
    <property type="entry name" value="Hexapeptide repeat proteins"/>
    <property type="match status" value="1"/>
</dbReference>
<dbReference type="Gene3D" id="3.90.550.10">
    <property type="entry name" value="Spore Coat Polysaccharide Biosynthesis Protein SpsA, Chain A"/>
    <property type="match status" value="1"/>
</dbReference>
<dbReference type="HAMAP" id="MF_01631">
    <property type="entry name" value="GlmU"/>
    <property type="match status" value="1"/>
</dbReference>
<dbReference type="InterPro" id="IPR005882">
    <property type="entry name" value="Bifunctional_GlmU"/>
</dbReference>
<dbReference type="InterPro" id="IPR050065">
    <property type="entry name" value="GlmU-like"/>
</dbReference>
<dbReference type="InterPro" id="IPR038009">
    <property type="entry name" value="GlmU_C_LbH"/>
</dbReference>
<dbReference type="InterPro" id="IPR001451">
    <property type="entry name" value="Hexapep"/>
</dbReference>
<dbReference type="InterPro" id="IPR018357">
    <property type="entry name" value="Hexapep_transf_CS"/>
</dbReference>
<dbReference type="InterPro" id="IPR005835">
    <property type="entry name" value="NTP_transferase_dom"/>
</dbReference>
<dbReference type="InterPro" id="IPR029044">
    <property type="entry name" value="Nucleotide-diphossugar_trans"/>
</dbReference>
<dbReference type="InterPro" id="IPR011004">
    <property type="entry name" value="Trimer_LpxA-like_sf"/>
</dbReference>
<dbReference type="NCBIfam" id="TIGR01173">
    <property type="entry name" value="glmU"/>
    <property type="match status" value="1"/>
</dbReference>
<dbReference type="NCBIfam" id="NF010934">
    <property type="entry name" value="PRK14354.1"/>
    <property type="match status" value="1"/>
</dbReference>
<dbReference type="PANTHER" id="PTHR43584:SF3">
    <property type="entry name" value="BIFUNCTIONAL PROTEIN GLMU"/>
    <property type="match status" value="1"/>
</dbReference>
<dbReference type="PANTHER" id="PTHR43584">
    <property type="entry name" value="NUCLEOTIDYL TRANSFERASE"/>
    <property type="match status" value="1"/>
</dbReference>
<dbReference type="Pfam" id="PF00132">
    <property type="entry name" value="Hexapep"/>
    <property type="match status" value="1"/>
</dbReference>
<dbReference type="Pfam" id="PF00483">
    <property type="entry name" value="NTP_transferase"/>
    <property type="match status" value="1"/>
</dbReference>
<dbReference type="SUPFAM" id="SSF53448">
    <property type="entry name" value="Nucleotide-diphospho-sugar transferases"/>
    <property type="match status" value="1"/>
</dbReference>
<dbReference type="SUPFAM" id="SSF51161">
    <property type="entry name" value="Trimeric LpxA-like enzymes"/>
    <property type="match status" value="1"/>
</dbReference>
<dbReference type="PROSITE" id="PS00101">
    <property type="entry name" value="HEXAPEP_TRANSFERASES"/>
    <property type="match status" value="1"/>
</dbReference>